<sequence>MSVSARSAAAEERSVNSSTMVAQQKNLEGYVGFANLPNQVYRKSVKRGFEFTLMVVGESGLGKSTLINSLFLTDLYSPEYPGPSHRIKKTVQVEQSKVLIKEGGVQLLLTIVDTPGFGDAVDNSNCWQPVIDYIDSKFEDYLNAESRVNRRQMPDNRVQCCLYFIAPSGHGLKPLDIEFMKRLHEKVNIIPLIAKADTLTPEECQQFKKQIMKEIQEHKIKIYEFPETDDEEENKLVKKIKDRLPLAVVGSNTIIEVNGKRVRGRQYPWGVAEVENGEHCDFTILRNMLIRTHMQDLKDVTNNVHYENYRSRKLAAVTYNGVDNNKNKGQLTKSPLAQMEEERREHVAKMKKMEMEMEQVFEMKVKEKVQKLKDSEAELQRRHEQMKKNLEAQHKELEEKRRQFEDEKANWEAQQRILEQQNSSRTLEKNKKKGKIF</sequence>
<dbReference type="EMBL" id="CR859665">
    <property type="protein sequence ID" value="CAH91826.1"/>
    <property type="molecule type" value="mRNA"/>
</dbReference>
<dbReference type="EMBL" id="CR861103">
    <property type="protein sequence ID" value="CAH93181.1"/>
    <property type="molecule type" value="mRNA"/>
</dbReference>
<dbReference type="EMBL" id="CR861376">
    <property type="protein sequence ID" value="CAH93435.1"/>
    <property type="molecule type" value="mRNA"/>
</dbReference>
<dbReference type="RefSeq" id="NP_001126872.1">
    <property type="nucleotide sequence ID" value="NM_001133400.1"/>
</dbReference>
<dbReference type="RefSeq" id="NP_001128835.1">
    <property type="nucleotide sequence ID" value="NM_001135363.1"/>
</dbReference>
<dbReference type="RefSeq" id="XP_009241135.1">
    <property type="nucleotide sequence ID" value="XM_009242860.1"/>
</dbReference>
<dbReference type="SMR" id="Q5R481"/>
<dbReference type="FunCoup" id="Q5R481">
    <property type="interactions" value="1807"/>
</dbReference>
<dbReference type="STRING" id="9601.ENSPPYP00000019772"/>
<dbReference type="GeneID" id="100173884"/>
<dbReference type="KEGG" id="pon:100173884"/>
<dbReference type="CTD" id="989"/>
<dbReference type="eggNOG" id="KOG2655">
    <property type="taxonomic scope" value="Eukaryota"/>
</dbReference>
<dbReference type="HOGENOM" id="CLU_017718_8_1_1"/>
<dbReference type="InParanoid" id="Q5R481"/>
<dbReference type="OrthoDB" id="416553at2759"/>
<dbReference type="Proteomes" id="UP000001595">
    <property type="component" value="Unplaced"/>
</dbReference>
<dbReference type="GO" id="GO:0005930">
    <property type="term" value="C:axoneme"/>
    <property type="evidence" value="ECO:0000250"/>
    <property type="project" value="UniProtKB"/>
</dbReference>
<dbReference type="GO" id="GO:0032154">
    <property type="term" value="C:cleavage furrow"/>
    <property type="evidence" value="ECO:0007669"/>
    <property type="project" value="UniProtKB-SubCell"/>
</dbReference>
<dbReference type="GO" id="GO:0000776">
    <property type="term" value="C:kinetochore"/>
    <property type="evidence" value="ECO:0007669"/>
    <property type="project" value="UniProtKB-KW"/>
</dbReference>
<dbReference type="GO" id="GO:0030496">
    <property type="term" value="C:midbody"/>
    <property type="evidence" value="ECO:0007669"/>
    <property type="project" value="UniProtKB-SubCell"/>
</dbReference>
<dbReference type="GO" id="GO:0031514">
    <property type="term" value="C:motile cilium"/>
    <property type="evidence" value="ECO:0007669"/>
    <property type="project" value="UniProtKB-SubCell"/>
</dbReference>
<dbReference type="GO" id="GO:0031105">
    <property type="term" value="C:septin complex"/>
    <property type="evidence" value="ECO:0000250"/>
    <property type="project" value="UniProtKB"/>
</dbReference>
<dbReference type="GO" id="GO:0005819">
    <property type="term" value="C:spindle"/>
    <property type="evidence" value="ECO:0007669"/>
    <property type="project" value="UniProtKB-SubCell"/>
</dbReference>
<dbReference type="GO" id="GO:0005525">
    <property type="term" value="F:GTP binding"/>
    <property type="evidence" value="ECO:0007669"/>
    <property type="project" value="UniProtKB-KW"/>
</dbReference>
<dbReference type="GO" id="GO:0030154">
    <property type="term" value="P:cell differentiation"/>
    <property type="evidence" value="ECO:0007669"/>
    <property type="project" value="UniProtKB-KW"/>
</dbReference>
<dbReference type="GO" id="GO:0051301">
    <property type="term" value="P:cell division"/>
    <property type="evidence" value="ECO:0007669"/>
    <property type="project" value="UniProtKB-KW"/>
</dbReference>
<dbReference type="GO" id="GO:0060271">
    <property type="term" value="P:cilium assembly"/>
    <property type="evidence" value="ECO:0000250"/>
    <property type="project" value="UniProtKB"/>
</dbReference>
<dbReference type="GO" id="GO:0016476">
    <property type="term" value="P:regulation of embryonic cell shape"/>
    <property type="evidence" value="ECO:0000250"/>
    <property type="project" value="UniProtKB"/>
</dbReference>
<dbReference type="GO" id="GO:0007283">
    <property type="term" value="P:spermatogenesis"/>
    <property type="evidence" value="ECO:0007669"/>
    <property type="project" value="UniProtKB-KW"/>
</dbReference>
<dbReference type="CDD" id="cd01850">
    <property type="entry name" value="CDC_Septin"/>
    <property type="match status" value="1"/>
</dbReference>
<dbReference type="FunFam" id="3.40.50.300:FF:000162">
    <property type="entry name" value="septin-7 isoform X1"/>
    <property type="match status" value="1"/>
</dbReference>
<dbReference type="Gene3D" id="3.40.50.300">
    <property type="entry name" value="P-loop containing nucleotide triphosphate hydrolases"/>
    <property type="match status" value="1"/>
</dbReference>
<dbReference type="InterPro" id="IPR030379">
    <property type="entry name" value="G_SEPTIN_dom"/>
</dbReference>
<dbReference type="InterPro" id="IPR027417">
    <property type="entry name" value="P-loop_NTPase"/>
</dbReference>
<dbReference type="InterPro" id="IPR016491">
    <property type="entry name" value="Septin"/>
</dbReference>
<dbReference type="InterPro" id="IPR008115">
    <property type="entry name" value="Septin7"/>
</dbReference>
<dbReference type="PANTHER" id="PTHR18884">
    <property type="entry name" value="SEPTIN"/>
    <property type="match status" value="1"/>
</dbReference>
<dbReference type="Pfam" id="PF00735">
    <property type="entry name" value="Septin"/>
    <property type="match status" value="1"/>
</dbReference>
<dbReference type="PIRSF" id="PIRSF006698">
    <property type="entry name" value="Septin"/>
    <property type="match status" value="1"/>
</dbReference>
<dbReference type="PRINTS" id="PR01742">
    <property type="entry name" value="SEPTIN7"/>
</dbReference>
<dbReference type="SUPFAM" id="SSF52540">
    <property type="entry name" value="P-loop containing nucleoside triphosphate hydrolases"/>
    <property type="match status" value="1"/>
</dbReference>
<dbReference type="PROSITE" id="PS51719">
    <property type="entry name" value="G_SEPTIN"/>
    <property type="match status" value="1"/>
</dbReference>
<accession>Q5R481</accession>
<accession>Q5R4Y5</accession>
<accession>Q5R8T4</accession>
<gene>
    <name evidence="3" type="primary">SEPTIN7</name>
    <name type="synonym">SEPT7</name>
</gene>
<evidence type="ECO:0000250" key="1"/>
<evidence type="ECO:0000250" key="2">
    <source>
        <dbReference type="UniProtKB" id="O55131"/>
    </source>
</evidence>
<evidence type="ECO:0000250" key="3">
    <source>
        <dbReference type="UniProtKB" id="Q16181"/>
    </source>
</evidence>
<evidence type="ECO:0000255" key="4"/>
<evidence type="ECO:0000255" key="5">
    <source>
        <dbReference type="PROSITE-ProRule" id="PRU01056"/>
    </source>
</evidence>
<evidence type="ECO:0000256" key="6">
    <source>
        <dbReference type="SAM" id="MobiDB-lite"/>
    </source>
</evidence>
<evidence type="ECO:0000303" key="7">
    <source ref="1"/>
</evidence>
<evidence type="ECO:0000305" key="8"/>
<protein>
    <recommendedName>
        <fullName>Septin-7</fullName>
    </recommendedName>
</protein>
<feature type="initiator methionine" description="Removed" evidence="3">
    <location>
        <position position="1"/>
    </location>
</feature>
<feature type="chain" id="PRO_0000173531" description="Septin-7">
    <location>
        <begin position="2"/>
        <end position="437"/>
    </location>
</feature>
<feature type="domain" description="Septin-type G" evidence="5">
    <location>
        <begin position="47"/>
        <end position="316"/>
    </location>
</feature>
<feature type="region of interest" description="Interaction with SEPTIN12" evidence="3">
    <location>
        <begin position="47"/>
        <end position="317"/>
    </location>
</feature>
<feature type="region of interest" description="G1 motif" evidence="5">
    <location>
        <begin position="57"/>
        <end position="64"/>
    </location>
</feature>
<feature type="region of interest" description="G3 motif" evidence="5">
    <location>
        <begin position="113"/>
        <end position="116"/>
    </location>
</feature>
<feature type="region of interest" description="G4 motif" evidence="5">
    <location>
        <begin position="194"/>
        <end position="197"/>
    </location>
</feature>
<feature type="region of interest" description="Disordered" evidence="6">
    <location>
        <begin position="378"/>
        <end position="437"/>
    </location>
</feature>
<feature type="coiled-coil region" evidence="4">
    <location>
        <begin position="336"/>
        <end position="433"/>
    </location>
</feature>
<feature type="compositionally biased region" description="Basic and acidic residues" evidence="6">
    <location>
        <begin position="378"/>
        <end position="410"/>
    </location>
</feature>
<feature type="binding site" evidence="1">
    <location>
        <begin position="57"/>
        <end position="64"/>
    </location>
    <ligand>
        <name>GTP</name>
        <dbReference type="ChEBI" id="CHEBI:37565"/>
    </ligand>
</feature>
<feature type="binding site" evidence="1">
    <location>
        <position position="90"/>
    </location>
    <ligand>
        <name>GTP</name>
        <dbReference type="ChEBI" id="CHEBI:37565"/>
    </ligand>
</feature>
<feature type="binding site" evidence="1">
    <location>
        <position position="116"/>
    </location>
    <ligand>
        <name>GTP</name>
        <dbReference type="ChEBI" id="CHEBI:37565"/>
    </ligand>
</feature>
<feature type="binding site" evidence="1">
    <location>
        <begin position="195"/>
        <end position="203"/>
    </location>
    <ligand>
        <name>GTP</name>
        <dbReference type="ChEBI" id="CHEBI:37565"/>
    </ligand>
</feature>
<feature type="binding site" evidence="1">
    <location>
        <position position="250"/>
    </location>
    <ligand>
        <name>GTP</name>
        <dbReference type="ChEBI" id="CHEBI:37565"/>
    </ligand>
</feature>
<feature type="binding site" evidence="1">
    <location>
        <position position="265"/>
    </location>
    <ligand>
        <name>GTP</name>
        <dbReference type="ChEBI" id="CHEBI:37565"/>
    </ligand>
</feature>
<feature type="modified residue" description="N-acetylserine" evidence="3">
    <location>
        <position position="2"/>
    </location>
</feature>
<feature type="modified residue" description="Phosphotyrosine" evidence="2">
    <location>
        <position position="30"/>
    </location>
</feature>
<feature type="modified residue" description="Phosphoserine" evidence="2">
    <location>
        <position position="77"/>
    </location>
</feature>
<feature type="modified residue" description="Phosphothreonine" evidence="3">
    <location>
        <position position="228"/>
    </location>
</feature>
<feature type="modified residue" description="Phosphoserine" evidence="3">
    <location>
        <position position="334"/>
    </location>
</feature>
<feature type="modified residue" description="N6-acetyllysine" evidence="2">
    <location>
        <position position="373"/>
    </location>
</feature>
<feature type="modified residue" description="Phosphoserine" evidence="3">
    <location>
        <position position="424"/>
    </location>
</feature>
<feature type="modified residue" description="Phosphothreonine" evidence="3">
    <location>
        <position position="426"/>
    </location>
</feature>
<feature type="splice variant" id="VSP_022203" description="In isoform 3." evidence="7">
    <original>VAQQ</original>
    <variation>A</variation>
    <location>
        <begin position="21"/>
        <end position="24"/>
    </location>
</feature>
<feature type="splice variant" id="VSP_022204" description="In isoform 2." evidence="7">
    <location>
        <position position="21"/>
    </location>
</feature>
<feature type="sequence conflict" description="In Ref. 1; CAH93435." evidence="8" ref="1">
    <original>N</original>
    <variation>D</variation>
    <location>
        <position position="16"/>
    </location>
</feature>
<feature type="sequence conflict" description="In Ref. 1; CAH91826." evidence="8" ref="1">
    <original>K</original>
    <variation>E</variation>
    <location>
        <position position="181"/>
    </location>
</feature>
<feature type="sequence conflict" description="In Ref. 1; CAH93181." evidence="8" ref="1">
    <original>P</original>
    <variation>L</variation>
    <location>
        <position position="335"/>
    </location>
</feature>
<feature type="sequence conflict" description="In Ref. 1; CAH93435." evidence="8" ref="1">
    <original>R</original>
    <variation>G</variation>
    <location>
        <position position="343"/>
    </location>
</feature>
<feature type="sequence conflict" description="In Ref. 1; CAH93181." evidence="8" ref="1">
    <original>Q</original>
    <variation>R</variation>
    <location>
        <position position="415"/>
    </location>
</feature>
<comment type="function">
    <text evidence="1 3">Filament-forming cytoskeletal GTPase. Required for normal organization of the actin cytoskeleton. Required for normal progress through mitosis. Involved in cytokinesis. Required for normal association of CENPE with the kinetochore. Plays a role in ciliogenesis and collective cell movements. Forms a filamentous structure with SEPTIN12, SEPTIN6, SEPTIN2 and probably SEPTIN4 at the sperm annulus which is required for the structural integrity and motility of the sperm tail during postmeiotic differentiation (By similarity).</text>
</comment>
<comment type="subunit">
    <text evidence="1 3">Septins polymerize into heterooligomeric protein complexes that form filaments, and associate with cellular membranes, actin filaments and microtubules. GTPase activity is required for filament formation. Filaments are assembled from asymmetrical heterotrimers, composed of SEPTIN2, SEPTIN6 and SEPTIN7 that associate head-to-head to form a hexameric unit. Within the trimer, directly interacts with SEPTIN6, while interaction with SEPTIN2 seems indirect. In the absence of SEPTIN6, forms homodimers. Interacts directly with CENPE and links CENPE to septin filaments composed of SEPTIN2, SEPTIN6 and SEPTIN7. Interacts with SEPTIN5, SEPTIN8, SEPTIN9 and SEPTIN11. Component of a septin core octameric complex consisting of SEPTIN12, SEPTIN7, SEPTIN6 and SEPTIN2 or SEPTIN4 in the order 12-7-6-2-2-6-7-12 or 12-7-6-4-4-6-7-12 and located in the sperm annulus; the SEPTIN12:SEPTIN7 association is mediated by the respective GTP-binding domains (By similarity).</text>
</comment>
<comment type="subcellular location">
    <subcellularLocation>
        <location>Cytoplasm</location>
    </subcellularLocation>
    <subcellularLocation>
        <location evidence="1">Chromosome</location>
        <location evidence="1">Centromere</location>
        <location evidence="1">Kinetochore</location>
    </subcellularLocation>
    <subcellularLocation>
        <location evidence="1">Cytoplasm</location>
        <location evidence="1">Cytoskeleton</location>
        <location evidence="1">Spindle</location>
    </subcellularLocation>
    <subcellularLocation>
        <location evidence="1">Cleavage furrow</location>
    </subcellularLocation>
    <subcellularLocation>
        <location evidence="1">Midbody</location>
    </subcellularLocation>
    <subcellularLocation>
        <location evidence="1">Cytoplasm</location>
        <location evidence="1">Cytoskeleton</location>
        <location evidence="1">Cilium axoneme</location>
    </subcellularLocation>
    <subcellularLocation>
        <location evidence="3">Cell projection</location>
        <location evidence="3">Cilium</location>
        <location evidence="3">Flagellum</location>
    </subcellularLocation>
    <text evidence="1 3">Distributed throughout the cytoplasm in prometaphase cells. Associated with the spindle during metaphase. Associated with the central spindle and at the cleavage furrow in anaphase cells. Detected at the midbody in telophase. Found in the sperm annulus (By similarity). Associated with actin stress fibers (By similarity).</text>
</comment>
<comment type="alternative products">
    <event type="alternative splicing"/>
    <isoform>
        <id>Q5R481-1</id>
        <name>1</name>
        <sequence type="displayed"/>
    </isoform>
    <isoform>
        <id>Q5R481-2</id>
        <name>2</name>
        <sequence type="described" ref="VSP_022204"/>
    </isoform>
    <isoform>
        <id>Q5R481-3</id>
        <name>3</name>
        <sequence type="described" ref="VSP_022203"/>
    </isoform>
</comment>
<comment type="miscellaneous">
    <text evidence="1">Coordinated expression with SEPTIN2 and SEPTIN6.</text>
</comment>
<comment type="similarity">
    <text evidence="5">Belongs to the TRAFAC class TrmE-Era-EngA-EngB-Septin-like GTPase superfamily. Septin GTPase family.</text>
</comment>
<proteinExistence type="evidence at transcript level"/>
<reference key="1">
    <citation type="submission" date="2004-11" db="EMBL/GenBank/DDBJ databases">
        <authorList>
            <consortium name="The German cDNA consortium"/>
        </authorList>
    </citation>
    <scope>NUCLEOTIDE SEQUENCE [LARGE SCALE MRNA] (ISOFORMS 1; 2 AND 3)</scope>
    <source>
        <tissue>Brain cortex</tissue>
    </source>
</reference>
<organism>
    <name type="scientific">Pongo abelii</name>
    <name type="common">Sumatran orangutan</name>
    <name type="synonym">Pongo pygmaeus abelii</name>
    <dbReference type="NCBI Taxonomy" id="9601"/>
    <lineage>
        <taxon>Eukaryota</taxon>
        <taxon>Metazoa</taxon>
        <taxon>Chordata</taxon>
        <taxon>Craniata</taxon>
        <taxon>Vertebrata</taxon>
        <taxon>Euteleostomi</taxon>
        <taxon>Mammalia</taxon>
        <taxon>Eutheria</taxon>
        <taxon>Euarchontoglires</taxon>
        <taxon>Primates</taxon>
        <taxon>Haplorrhini</taxon>
        <taxon>Catarrhini</taxon>
        <taxon>Hominidae</taxon>
        <taxon>Pongo</taxon>
    </lineage>
</organism>
<keyword id="KW-0007">Acetylation</keyword>
<keyword id="KW-0025">Alternative splicing</keyword>
<keyword id="KW-0131">Cell cycle</keyword>
<keyword id="KW-0132">Cell division</keyword>
<keyword id="KW-0966">Cell projection</keyword>
<keyword id="KW-0137">Centromere</keyword>
<keyword id="KW-0158">Chromosome</keyword>
<keyword id="KW-0969">Cilium</keyword>
<keyword id="KW-0175">Coiled coil</keyword>
<keyword id="KW-0963">Cytoplasm</keyword>
<keyword id="KW-0206">Cytoskeleton</keyword>
<keyword id="KW-0221">Differentiation</keyword>
<keyword id="KW-0282">Flagellum</keyword>
<keyword id="KW-0342">GTP-binding</keyword>
<keyword id="KW-0995">Kinetochore</keyword>
<keyword id="KW-0498">Mitosis</keyword>
<keyword id="KW-0547">Nucleotide-binding</keyword>
<keyword id="KW-0597">Phosphoprotein</keyword>
<keyword id="KW-1185">Reference proteome</keyword>
<keyword id="KW-0744">Spermatogenesis</keyword>
<name>SEPT7_PONAB</name>